<proteinExistence type="inferred from homology"/>
<reference key="1">
    <citation type="journal article" date="2005" name="Science">
        <title>Genome streamlining in a cosmopolitan oceanic bacterium.</title>
        <authorList>
            <person name="Giovannoni S.J."/>
            <person name="Tripp H.J."/>
            <person name="Givan S."/>
            <person name="Podar M."/>
            <person name="Vergin K.L."/>
            <person name="Baptista D."/>
            <person name="Bibbs L."/>
            <person name="Eads J."/>
            <person name="Richardson T.H."/>
            <person name="Noordewier M."/>
            <person name="Rappe M.S."/>
            <person name="Short J.M."/>
            <person name="Carrington J.C."/>
            <person name="Mathur E.J."/>
        </authorList>
    </citation>
    <scope>NUCLEOTIDE SEQUENCE [LARGE SCALE GENOMIC DNA]</scope>
    <source>
        <strain>HTCC1062</strain>
    </source>
</reference>
<organism>
    <name type="scientific">Pelagibacter ubique (strain HTCC1062)</name>
    <dbReference type="NCBI Taxonomy" id="335992"/>
    <lineage>
        <taxon>Bacteria</taxon>
        <taxon>Pseudomonadati</taxon>
        <taxon>Pseudomonadota</taxon>
        <taxon>Alphaproteobacteria</taxon>
        <taxon>Candidatus Pelagibacterales</taxon>
        <taxon>Candidatus Pelagibacteraceae</taxon>
        <taxon>Candidatus Pelagibacter</taxon>
    </lineage>
</organism>
<sequence length="889" mass="100647">MADKTLNQIRTTFLDYFEKNDHKIVESSNLVPNNDPTLMFANSGMVQFKNIFTGLEKRDYVRATTSQKCVRAGGKHNDLENVGYTPRHHTFFEMLGNFSFGDYFKEEAISYAWNLITKEFGIDKNRLYVTVYHNDEEAFNFWKKIAGFSDDRIIKIATSDNFWSMGDTGPCGPCSEIFYDHGDHLEGGLPGTKNEDGNRFIEIWNLVFMQYEQISKDKRINLPKPSVDTGMGLERIAALLQGTHDNYETDHFKKLILSASDTLNVKVTDDNQSSFRVIADHLRASSFLLAEGVLPSNEGRGYVLRRIMRRGMRHSHLLGSKKPVFYNIFKTLLEEMSNNYPELERAQSLIKETLKTEEEKFLVLLDRGIKILNEELEKVEKILPGEVAFKLYDTFGFPLDLTEDILKNKSMTVDGEKFDLLMKESKKLAKKNWKGSGDSSVDQIWFDIKDRLGATDFLGYSTDKAEGVVTLILKNNKEVQDLQENDEGIIITNQTPFYGESGGQVADTGIISKEAFEFEVSDVQKKLGDLFVHYGKVKRGSVKLKDNVELKIDTQRRNNIRAYHSATHLLHEALRRVLGEHVTQKGSLVQSDRLRFDFSHMKPISDEEIRKIEHYVNSIIEKKSEVKTRIMTPKEAVENGALALFGEKYGDEVRVLSMGDEEGKFFSTELCGGTHVVNTADIGKFKIISQSSIAAGVRRVEALRDAQLIDFLKEKENQSNLSDQKNEAVIKELETKIIKLGGKPNLQNKDQVTLIKDLNRQFDQLSVISILKDKDKNKINDQTINGFKVRFQNIIDLPFKDLRKLIDEGKKEIGEGLVVIYAINDNKVGLAVGVTKTLEKKFDAVKIVRAGSEVIGGKGGGGRADFAQAGGTLPDKIEESFENIKKLIN</sequence>
<accession>Q4FMX6</accession>
<protein>
    <recommendedName>
        <fullName evidence="1">Alanine--tRNA ligase</fullName>
        <ecNumber evidence="1">6.1.1.7</ecNumber>
    </recommendedName>
    <alternativeName>
        <fullName evidence="1">Alanyl-tRNA synthetase</fullName>
        <shortName evidence="1">AlaRS</shortName>
    </alternativeName>
</protein>
<keyword id="KW-0030">Aminoacyl-tRNA synthetase</keyword>
<keyword id="KW-0067">ATP-binding</keyword>
<keyword id="KW-0963">Cytoplasm</keyword>
<keyword id="KW-0436">Ligase</keyword>
<keyword id="KW-0479">Metal-binding</keyword>
<keyword id="KW-0547">Nucleotide-binding</keyword>
<keyword id="KW-0648">Protein biosynthesis</keyword>
<keyword id="KW-1185">Reference proteome</keyword>
<keyword id="KW-0694">RNA-binding</keyword>
<keyword id="KW-0820">tRNA-binding</keyword>
<keyword id="KW-0862">Zinc</keyword>
<dbReference type="EC" id="6.1.1.7" evidence="1"/>
<dbReference type="EMBL" id="CP000084">
    <property type="protein sequence ID" value="AAZ21463.1"/>
    <property type="molecule type" value="Genomic_DNA"/>
</dbReference>
<dbReference type="RefSeq" id="WP_011281834.1">
    <property type="nucleotide sequence ID" value="NC_007205.1"/>
</dbReference>
<dbReference type="SMR" id="Q4FMX6"/>
<dbReference type="STRING" id="335992.SAR11_0643"/>
<dbReference type="GeneID" id="66295147"/>
<dbReference type="KEGG" id="pub:SAR11_0643"/>
<dbReference type="eggNOG" id="COG0013">
    <property type="taxonomic scope" value="Bacteria"/>
</dbReference>
<dbReference type="HOGENOM" id="CLU_004485_1_1_5"/>
<dbReference type="OrthoDB" id="9803884at2"/>
<dbReference type="Proteomes" id="UP000002528">
    <property type="component" value="Chromosome"/>
</dbReference>
<dbReference type="GO" id="GO:0005829">
    <property type="term" value="C:cytosol"/>
    <property type="evidence" value="ECO:0007669"/>
    <property type="project" value="TreeGrafter"/>
</dbReference>
<dbReference type="GO" id="GO:0004813">
    <property type="term" value="F:alanine-tRNA ligase activity"/>
    <property type="evidence" value="ECO:0007669"/>
    <property type="project" value="UniProtKB-UniRule"/>
</dbReference>
<dbReference type="GO" id="GO:0002161">
    <property type="term" value="F:aminoacyl-tRNA deacylase activity"/>
    <property type="evidence" value="ECO:0007669"/>
    <property type="project" value="TreeGrafter"/>
</dbReference>
<dbReference type="GO" id="GO:0005524">
    <property type="term" value="F:ATP binding"/>
    <property type="evidence" value="ECO:0007669"/>
    <property type="project" value="UniProtKB-UniRule"/>
</dbReference>
<dbReference type="GO" id="GO:0000049">
    <property type="term" value="F:tRNA binding"/>
    <property type="evidence" value="ECO:0007669"/>
    <property type="project" value="UniProtKB-KW"/>
</dbReference>
<dbReference type="GO" id="GO:0008270">
    <property type="term" value="F:zinc ion binding"/>
    <property type="evidence" value="ECO:0007669"/>
    <property type="project" value="UniProtKB-UniRule"/>
</dbReference>
<dbReference type="GO" id="GO:0006419">
    <property type="term" value="P:alanyl-tRNA aminoacylation"/>
    <property type="evidence" value="ECO:0007669"/>
    <property type="project" value="UniProtKB-UniRule"/>
</dbReference>
<dbReference type="GO" id="GO:0045892">
    <property type="term" value="P:negative regulation of DNA-templated transcription"/>
    <property type="evidence" value="ECO:0007669"/>
    <property type="project" value="TreeGrafter"/>
</dbReference>
<dbReference type="CDD" id="cd00673">
    <property type="entry name" value="AlaRS_core"/>
    <property type="match status" value="1"/>
</dbReference>
<dbReference type="FunFam" id="2.40.30.130:FF:000001">
    <property type="entry name" value="Alanine--tRNA ligase"/>
    <property type="match status" value="1"/>
</dbReference>
<dbReference type="FunFam" id="3.10.310.40:FF:000001">
    <property type="entry name" value="Alanine--tRNA ligase"/>
    <property type="match status" value="1"/>
</dbReference>
<dbReference type="FunFam" id="3.30.54.20:FF:000001">
    <property type="entry name" value="Alanine--tRNA ligase"/>
    <property type="match status" value="1"/>
</dbReference>
<dbReference type="FunFam" id="3.30.930.10:FF:000004">
    <property type="entry name" value="Alanine--tRNA ligase"/>
    <property type="match status" value="1"/>
</dbReference>
<dbReference type="FunFam" id="3.30.980.10:FF:000004">
    <property type="entry name" value="Alanine--tRNA ligase, cytoplasmic"/>
    <property type="match status" value="1"/>
</dbReference>
<dbReference type="Gene3D" id="2.40.30.130">
    <property type="match status" value="1"/>
</dbReference>
<dbReference type="Gene3D" id="3.10.310.40">
    <property type="match status" value="1"/>
</dbReference>
<dbReference type="Gene3D" id="3.30.54.20">
    <property type="match status" value="1"/>
</dbReference>
<dbReference type="Gene3D" id="3.30.930.10">
    <property type="entry name" value="Bira Bifunctional Protein, Domain 2"/>
    <property type="match status" value="1"/>
</dbReference>
<dbReference type="Gene3D" id="3.30.980.10">
    <property type="entry name" value="Threonyl-trna Synthetase, Chain A, domain 2"/>
    <property type="match status" value="1"/>
</dbReference>
<dbReference type="HAMAP" id="MF_00036_B">
    <property type="entry name" value="Ala_tRNA_synth_B"/>
    <property type="match status" value="1"/>
</dbReference>
<dbReference type="InterPro" id="IPR045864">
    <property type="entry name" value="aa-tRNA-synth_II/BPL/LPL"/>
</dbReference>
<dbReference type="InterPro" id="IPR002318">
    <property type="entry name" value="Ala-tRNA-lgiase_IIc"/>
</dbReference>
<dbReference type="InterPro" id="IPR018162">
    <property type="entry name" value="Ala-tRNA-ligase_IIc_anticod-bd"/>
</dbReference>
<dbReference type="InterPro" id="IPR018165">
    <property type="entry name" value="Ala-tRNA-synth_IIc_core"/>
</dbReference>
<dbReference type="InterPro" id="IPR018164">
    <property type="entry name" value="Ala-tRNA-synth_IIc_N"/>
</dbReference>
<dbReference type="InterPro" id="IPR050058">
    <property type="entry name" value="Ala-tRNA_ligase"/>
</dbReference>
<dbReference type="InterPro" id="IPR023033">
    <property type="entry name" value="Ala_tRNA_ligase_euk/bac"/>
</dbReference>
<dbReference type="InterPro" id="IPR003156">
    <property type="entry name" value="DHHA1_dom"/>
</dbReference>
<dbReference type="InterPro" id="IPR018163">
    <property type="entry name" value="Thr/Ala-tRNA-synth_IIc_edit"/>
</dbReference>
<dbReference type="InterPro" id="IPR009000">
    <property type="entry name" value="Transl_B-barrel_sf"/>
</dbReference>
<dbReference type="InterPro" id="IPR012947">
    <property type="entry name" value="tRNA_SAD"/>
</dbReference>
<dbReference type="NCBIfam" id="TIGR00344">
    <property type="entry name" value="alaS"/>
    <property type="match status" value="1"/>
</dbReference>
<dbReference type="PANTHER" id="PTHR11777:SF9">
    <property type="entry name" value="ALANINE--TRNA LIGASE, CYTOPLASMIC"/>
    <property type="match status" value="1"/>
</dbReference>
<dbReference type="PANTHER" id="PTHR11777">
    <property type="entry name" value="ALANYL-TRNA SYNTHETASE"/>
    <property type="match status" value="1"/>
</dbReference>
<dbReference type="Pfam" id="PF02272">
    <property type="entry name" value="DHHA1"/>
    <property type="match status" value="1"/>
</dbReference>
<dbReference type="Pfam" id="PF01411">
    <property type="entry name" value="tRNA-synt_2c"/>
    <property type="match status" value="1"/>
</dbReference>
<dbReference type="Pfam" id="PF07973">
    <property type="entry name" value="tRNA_SAD"/>
    <property type="match status" value="1"/>
</dbReference>
<dbReference type="PRINTS" id="PR00980">
    <property type="entry name" value="TRNASYNTHALA"/>
</dbReference>
<dbReference type="SMART" id="SM00863">
    <property type="entry name" value="tRNA_SAD"/>
    <property type="match status" value="1"/>
</dbReference>
<dbReference type="SUPFAM" id="SSF55681">
    <property type="entry name" value="Class II aaRS and biotin synthetases"/>
    <property type="match status" value="1"/>
</dbReference>
<dbReference type="SUPFAM" id="SSF101353">
    <property type="entry name" value="Putative anticodon-binding domain of alanyl-tRNA synthetase (AlaRS)"/>
    <property type="match status" value="1"/>
</dbReference>
<dbReference type="SUPFAM" id="SSF55186">
    <property type="entry name" value="ThrRS/AlaRS common domain"/>
    <property type="match status" value="1"/>
</dbReference>
<dbReference type="SUPFAM" id="SSF50447">
    <property type="entry name" value="Translation proteins"/>
    <property type="match status" value="1"/>
</dbReference>
<dbReference type="PROSITE" id="PS50860">
    <property type="entry name" value="AA_TRNA_LIGASE_II_ALA"/>
    <property type="match status" value="1"/>
</dbReference>
<feature type="chain" id="PRO_0000075168" description="Alanine--tRNA ligase">
    <location>
        <begin position="1"/>
        <end position="889"/>
    </location>
</feature>
<feature type="binding site" evidence="1">
    <location>
        <position position="564"/>
    </location>
    <ligand>
        <name>Zn(2+)</name>
        <dbReference type="ChEBI" id="CHEBI:29105"/>
    </ligand>
</feature>
<feature type="binding site" evidence="1">
    <location>
        <position position="568"/>
    </location>
    <ligand>
        <name>Zn(2+)</name>
        <dbReference type="ChEBI" id="CHEBI:29105"/>
    </ligand>
</feature>
<feature type="binding site" evidence="1">
    <location>
        <position position="671"/>
    </location>
    <ligand>
        <name>Zn(2+)</name>
        <dbReference type="ChEBI" id="CHEBI:29105"/>
    </ligand>
</feature>
<feature type="binding site" evidence="1">
    <location>
        <position position="675"/>
    </location>
    <ligand>
        <name>Zn(2+)</name>
        <dbReference type="ChEBI" id="CHEBI:29105"/>
    </ligand>
</feature>
<gene>
    <name evidence="1" type="primary">alaS</name>
    <name type="ordered locus">SAR11_0643</name>
</gene>
<comment type="function">
    <text evidence="1">Catalyzes the attachment of alanine to tRNA(Ala) in a two-step reaction: alanine is first activated by ATP to form Ala-AMP and then transferred to the acceptor end of tRNA(Ala). Also edits incorrectly charged Ser-tRNA(Ala) and Gly-tRNA(Ala) via its editing domain.</text>
</comment>
<comment type="catalytic activity">
    <reaction evidence="1">
        <text>tRNA(Ala) + L-alanine + ATP = L-alanyl-tRNA(Ala) + AMP + diphosphate</text>
        <dbReference type="Rhea" id="RHEA:12540"/>
        <dbReference type="Rhea" id="RHEA-COMP:9657"/>
        <dbReference type="Rhea" id="RHEA-COMP:9923"/>
        <dbReference type="ChEBI" id="CHEBI:30616"/>
        <dbReference type="ChEBI" id="CHEBI:33019"/>
        <dbReference type="ChEBI" id="CHEBI:57972"/>
        <dbReference type="ChEBI" id="CHEBI:78442"/>
        <dbReference type="ChEBI" id="CHEBI:78497"/>
        <dbReference type="ChEBI" id="CHEBI:456215"/>
        <dbReference type="EC" id="6.1.1.7"/>
    </reaction>
</comment>
<comment type="cofactor">
    <cofactor evidence="1">
        <name>Zn(2+)</name>
        <dbReference type="ChEBI" id="CHEBI:29105"/>
    </cofactor>
    <text evidence="1">Binds 1 zinc ion per subunit.</text>
</comment>
<comment type="subcellular location">
    <subcellularLocation>
        <location evidence="1">Cytoplasm</location>
    </subcellularLocation>
</comment>
<comment type="domain">
    <text evidence="1">Consists of three domains; the N-terminal catalytic domain, the editing domain and the C-terminal C-Ala domain. The editing domain removes incorrectly charged amino acids, while the C-Ala domain, along with tRNA(Ala), serves as a bridge to cooperatively bring together the editing and aminoacylation centers thus stimulating deacylation of misacylated tRNAs.</text>
</comment>
<comment type="similarity">
    <text evidence="1">Belongs to the class-II aminoacyl-tRNA synthetase family.</text>
</comment>
<evidence type="ECO:0000255" key="1">
    <source>
        <dbReference type="HAMAP-Rule" id="MF_00036"/>
    </source>
</evidence>
<name>SYA_PELUB</name>